<evidence type="ECO:0000250" key="1"/>
<evidence type="ECO:0000255" key="2"/>
<evidence type="ECO:0000255" key="3">
    <source>
        <dbReference type="PROSITE-ProRule" id="PRU01240"/>
    </source>
</evidence>
<evidence type="ECO:0000305" key="4"/>
<comment type="function">
    <text evidence="1">Secreted subtilisin-like serine protease with keratinolytic activity that contributes to pathogenicity.</text>
</comment>
<comment type="subcellular location">
    <subcellularLocation>
        <location evidence="1">Secreted</location>
    </subcellularLocation>
</comment>
<comment type="similarity">
    <text evidence="4">Belongs to the peptidase S8 family.</text>
</comment>
<protein>
    <recommendedName>
        <fullName>Subtilisin-like protease 7</fullName>
        <ecNumber>3.4.21.-</ecNumber>
    </recommendedName>
</protein>
<organism>
    <name type="scientific">Trichophyton verrucosum</name>
    <name type="common">Cattle ringworm fungus</name>
    <dbReference type="NCBI Taxonomy" id="63417"/>
    <lineage>
        <taxon>Eukaryota</taxon>
        <taxon>Fungi</taxon>
        <taxon>Dikarya</taxon>
        <taxon>Ascomycota</taxon>
        <taxon>Pezizomycotina</taxon>
        <taxon>Eurotiomycetes</taxon>
        <taxon>Eurotiomycetidae</taxon>
        <taxon>Onygenales</taxon>
        <taxon>Arthrodermataceae</taxon>
        <taxon>Trichophyton</taxon>
    </lineage>
</organism>
<gene>
    <name type="primary">SUB7</name>
</gene>
<dbReference type="EC" id="3.4.21.-"/>
<dbReference type="EMBL" id="AY439111">
    <property type="protein sequence ID" value="AAS45679.1"/>
    <property type="molecule type" value="Genomic_DNA"/>
</dbReference>
<dbReference type="SMR" id="Q5VJ71"/>
<dbReference type="GlyCosmos" id="Q5VJ71">
    <property type="glycosylation" value="4 sites, No reported glycans"/>
</dbReference>
<dbReference type="GO" id="GO:0005576">
    <property type="term" value="C:extracellular region"/>
    <property type="evidence" value="ECO:0007669"/>
    <property type="project" value="UniProtKB-SubCell"/>
</dbReference>
<dbReference type="GO" id="GO:0004252">
    <property type="term" value="F:serine-type endopeptidase activity"/>
    <property type="evidence" value="ECO:0007669"/>
    <property type="project" value="InterPro"/>
</dbReference>
<dbReference type="GO" id="GO:0006508">
    <property type="term" value="P:proteolysis"/>
    <property type="evidence" value="ECO:0007669"/>
    <property type="project" value="UniProtKB-KW"/>
</dbReference>
<dbReference type="CDD" id="cd04077">
    <property type="entry name" value="Peptidases_S8_PCSK9_ProteinaseK_like"/>
    <property type="match status" value="1"/>
</dbReference>
<dbReference type="FunFam" id="3.40.50.200:FF:000014">
    <property type="entry name" value="Proteinase K"/>
    <property type="match status" value="1"/>
</dbReference>
<dbReference type="Gene3D" id="3.30.70.80">
    <property type="entry name" value="Peptidase S8 propeptide/proteinase inhibitor I9"/>
    <property type="match status" value="1"/>
</dbReference>
<dbReference type="Gene3D" id="3.40.50.200">
    <property type="entry name" value="Peptidase S8/S53 domain"/>
    <property type="match status" value="1"/>
</dbReference>
<dbReference type="InterPro" id="IPR034193">
    <property type="entry name" value="PCSK9_ProteinaseK-like"/>
</dbReference>
<dbReference type="InterPro" id="IPR000209">
    <property type="entry name" value="Peptidase_S8/S53_dom"/>
</dbReference>
<dbReference type="InterPro" id="IPR036852">
    <property type="entry name" value="Peptidase_S8/S53_dom_sf"/>
</dbReference>
<dbReference type="InterPro" id="IPR022398">
    <property type="entry name" value="Peptidase_S8_His-AS"/>
</dbReference>
<dbReference type="InterPro" id="IPR023828">
    <property type="entry name" value="Peptidase_S8_Ser-AS"/>
</dbReference>
<dbReference type="InterPro" id="IPR050131">
    <property type="entry name" value="Peptidase_S8_subtilisin-like"/>
</dbReference>
<dbReference type="InterPro" id="IPR015500">
    <property type="entry name" value="Peptidase_S8_subtilisin-rel"/>
</dbReference>
<dbReference type="InterPro" id="IPR010259">
    <property type="entry name" value="S8pro/Inhibitor_I9"/>
</dbReference>
<dbReference type="InterPro" id="IPR037045">
    <property type="entry name" value="S8pro/Inhibitor_I9_sf"/>
</dbReference>
<dbReference type="PANTHER" id="PTHR43806:SF11">
    <property type="entry name" value="CEREVISIN-RELATED"/>
    <property type="match status" value="1"/>
</dbReference>
<dbReference type="PANTHER" id="PTHR43806">
    <property type="entry name" value="PEPTIDASE S8"/>
    <property type="match status" value="1"/>
</dbReference>
<dbReference type="Pfam" id="PF05922">
    <property type="entry name" value="Inhibitor_I9"/>
    <property type="match status" value="1"/>
</dbReference>
<dbReference type="Pfam" id="PF00082">
    <property type="entry name" value="Peptidase_S8"/>
    <property type="match status" value="1"/>
</dbReference>
<dbReference type="PRINTS" id="PR00723">
    <property type="entry name" value="SUBTILISIN"/>
</dbReference>
<dbReference type="SUPFAM" id="SSF54897">
    <property type="entry name" value="Protease propeptides/inhibitors"/>
    <property type="match status" value="1"/>
</dbReference>
<dbReference type="SUPFAM" id="SSF52743">
    <property type="entry name" value="Subtilisin-like"/>
    <property type="match status" value="1"/>
</dbReference>
<dbReference type="PROSITE" id="PS51892">
    <property type="entry name" value="SUBTILASE"/>
    <property type="match status" value="1"/>
</dbReference>
<dbReference type="PROSITE" id="PS00137">
    <property type="entry name" value="SUBTILASE_HIS"/>
    <property type="match status" value="1"/>
</dbReference>
<dbReference type="PROSITE" id="PS00138">
    <property type="entry name" value="SUBTILASE_SER"/>
    <property type="match status" value="1"/>
</dbReference>
<feature type="signal peptide" evidence="2">
    <location>
        <begin position="1"/>
        <end position="20"/>
    </location>
</feature>
<feature type="propeptide" id="PRO_0000380830" evidence="1">
    <location>
        <begin position="21"/>
        <end position="119"/>
    </location>
</feature>
<feature type="chain" id="PRO_0000380831" description="Subtilisin-like protease 7">
    <location>
        <begin position="120"/>
        <end position="400"/>
    </location>
</feature>
<feature type="domain" description="Inhibitor I9" evidence="2">
    <location>
        <begin position="36"/>
        <end position="118"/>
    </location>
</feature>
<feature type="domain" description="Peptidase S8" evidence="3">
    <location>
        <begin position="129"/>
        <end position="400"/>
    </location>
</feature>
<feature type="active site" description="Charge relay system" evidence="3">
    <location>
        <position position="161"/>
    </location>
</feature>
<feature type="active site" description="Charge relay system" evidence="3">
    <location>
        <position position="192"/>
    </location>
</feature>
<feature type="active site" description="Charge relay system" evidence="3">
    <location>
        <position position="346"/>
    </location>
</feature>
<feature type="glycosylation site" description="N-linked (GlcNAc...) asparagine" evidence="2">
    <location>
        <position position="58"/>
    </location>
</feature>
<feature type="glycosylation site" description="N-linked (GlcNAc...) asparagine" evidence="2">
    <location>
        <position position="222"/>
    </location>
</feature>
<feature type="glycosylation site" description="N-linked (GlcNAc...) asparagine" evidence="2">
    <location>
        <position position="252"/>
    </location>
</feature>
<feature type="glycosylation site" description="N-linked (GlcNAc...) asparagine" evidence="2">
    <location>
        <position position="396"/>
    </location>
</feature>
<proteinExistence type="inferred from homology"/>
<keyword id="KW-0325">Glycoprotein</keyword>
<keyword id="KW-0378">Hydrolase</keyword>
<keyword id="KW-0645">Protease</keyword>
<keyword id="KW-0964">Secreted</keyword>
<keyword id="KW-0720">Serine protease</keyword>
<keyword id="KW-0732">Signal</keyword>
<keyword id="KW-0843">Virulence</keyword>
<keyword id="KW-0865">Zymogen</keyword>
<accession>Q5VJ71</accession>
<sequence>MGFITKAIPLALAAASVINGAEIMETRAGVQTLADKYIVVMNDGMTDKDFDSHRSWVNRTHRRRLIRRGAKAMGGMKHTYRFPTGLKGYSGHFDEQMINEISKRADVKYIERDARVQINAIEQQDNVPSWGLARVGSKEPGGTTYYYDGTAGEGSTAYVIDTGTDIQHEEFEGRATWGANFVDDMDMDCNGHGTHVSGTIGGKTFGVAKKSNVVAVKVLDCNGSGSNSGVIMGMEWATKDAQQKGADKAVANMSLGGAFSQASNDAAAAIAQGGVFLAVAAGNDNVDAADSSPASEPSICTVAASTEQDGKADFSNFGQVVDVYAPGDSITSAKPGGGSQVLSGTSMATPHVAGLGAYLIGLGKGGGPGLCDTIKQMAIDVIQNPGASTTSKLINNGSGM</sequence>
<name>SUB7_TRIVC</name>
<reference key="1">
    <citation type="submission" date="2003-10" db="EMBL/GenBank/DDBJ databases">
        <title>Subtilisin-like proteases gene family in Dermatophytes.</title>
        <authorList>
            <person name="Jousson O."/>
            <person name="Monod M."/>
        </authorList>
    </citation>
    <scope>NUCLEOTIDE SEQUENCE [GENOMIC DNA]</scope>
</reference>